<feature type="chain" id="PRO_1000009825" description="dCTP deaminase, dUMP-forming">
    <location>
        <begin position="1"/>
        <end position="196"/>
    </location>
</feature>
<feature type="active site" description="Proton donor/acceptor" evidence="1">
    <location>
        <position position="129"/>
    </location>
</feature>
<feature type="binding site" evidence="1">
    <location>
        <begin position="101"/>
        <end position="106"/>
    </location>
    <ligand>
        <name>dCTP</name>
        <dbReference type="ChEBI" id="CHEBI:61481"/>
    </ligand>
</feature>
<feature type="binding site" evidence="1">
    <location>
        <position position="119"/>
    </location>
    <ligand>
        <name>dCTP</name>
        <dbReference type="ChEBI" id="CHEBI:61481"/>
    </ligand>
</feature>
<feature type="binding site" evidence="1">
    <location>
        <begin position="127"/>
        <end position="129"/>
    </location>
    <ligand>
        <name>dCTP</name>
        <dbReference type="ChEBI" id="CHEBI:61481"/>
    </ligand>
</feature>
<feature type="binding site" evidence="1">
    <location>
        <position position="148"/>
    </location>
    <ligand>
        <name>dCTP</name>
        <dbReference type="ChEBI" id="CHEBI:61481"/>
    </ligand>
</feature>
<feature type="binding site" evidence="1">
    <location>
        <position position="162"/>
    </location>
    <ligand>
        <name>dCTP</name>
        <dbReference type="ChEBI" id="CHEBI:61481"/>
    </ligand>
</feature>
<feature type="binding site" evidence="1">
    <location>
        <position position="174"/>
    </location>
    <ligand>
        <name>dCTP</name>
        <dbReference type="ChEBI" id="CHEBI:61481"/>
    </ligand>
</feature>
<feature type="site" description="Important for bifunctional activity" evidence="1">
    <location>
        <begin position="116"/>
        <end position="117"/>
    </location>
</feature>
<dbReference type="EC" id="3.5.4.30" evidence="1"/>
<dbReference type="EMBL" id="CP000088">
    <property type="protein sequence ID" value="AAZ56965.1"/>
    <property type="molecule type" value="Genomic_DNA"/>
</dbReference>
<dbReference type="RefSeq" id="WP_011293355.1">
    <property type="nucleotide sequence ID" value="NC_007333.1"/>
</dbReference>
<dbReference type="SMR" id="Q47KQ7"/>
<dbReference type="STRING" id="269800.Tfu_2932"/>
<dbReference type="KEGG" id="tfu:Tfu_2932"/>
<dbReference type="eggNOG" id="COG0717">
    <property type="taxonomic scope" value="Bacteria"/>
</dbReference>
<dbReference type="HOGENOM" id="CLU_087476_2_0_11"/>
<dbReference type="OrthoDB" id="9780956at2"/>
<dbReference type="UniPathway" id="UPA00610">
    <property type="reaction ID" value="UER00667"/>
</dbReference>
<dbReference type="GO" id="GO:0033973">
    <property type="term" value="F:dCTP deaminase (dUMP-forming) activity"/>
    <property type="evidence" value="ECO:0007669"/>
    <property type="project" value="UniProtKB-UniRule"/>
</dbReference>
<dbReference type="GO" id="GO:0008829">
    <property type="term" value="F:dCTP deaminase activity"/>
    <property type="evidence" value="ECO:0007669"/>
    <property type="project" value="InterPro"/>
</dbReference>
<dbReference type="GO" id="GO:0000166">
    <property type="term" value="F:nucleotide binding"/>
    <property type="evidence" value="ECO:0007669"/>
    <property type="project" value="UniProtKB-KW"/>
</dbReference>
<dbReference type="GO" id="GO:0006226">
    <property type="term" value="P:dUMP biosynthetic process"/>
    <property type="evidence" value="ECO:0007669"/>
    <property type="project" value="UniProtKB-UniRule"/>
</dbReference>
<dbReference type="GO" id="GO:0006229">
    <property type="term" value="P:dUTP biosynthetic process"/>
    <property type="evidence" value="ECO:0007669"/>
    <property type="project" value="InterPro"/>
</dbReference>
<dbReference type="GO" id="GO:0015949">
    <property type="term" value="P:nucleobase-containing small molecule interconversion"/>
    <property type="evidence" value="ECO:0007669"/>
    <property type="project" value="TreeGrafter"/>
</dbReference>
<dbReference type="CDD" id="cd07557">
    <property type="entry name" value="trimeric_dUTPase"/>
    <property type="match status" value="1"/>
</dbReference>
<dbReference type="FunFam" id="2.70.40.10:FF:000005">
    <property type="entry name" value="dCTP deaminase, dUMP-forming"/>
    <property type="match status" value="1"/>
</dbReference>
<dbReference type="Gene3D" id="2.70.40.10">
    <property type="match status" value="1"/>
</dbReference>
<dbReference type="HAMAP" id="MF_00146">
    <property type="entry name" value="dCTP_deaminase"/>
    <property type="match status" value="1"/>
</dbReference>
<dbReference type="InterPro" id="IPR011962">
    <property type="entry name" value="dCTP_deaminase"/>
</dbReference>
<dbReference type="InterPro" id="IPR036157">
    <property type="entry name" value="dUTPase-like_sf"/>
</dbReference>
<dbReference type="InterPro" id="IPR033704">
    <property type="entry name" value="dUTPase_trimeric"/>
</dbReference>
<dbReference type="NCBIfam" id="TIGR02274">
    <property type="entry name" value="dCTP_deam"/>
    <property type="match status" value="1"/>
</dbReference>
<dbReference type="PANTHER" id="PTHR42680">
    <property type="entry name" value="DCTP DEAMINASE"/>
    <property type="match status" value="1"/>
</dbReference>
<dbReference type="PANTHER" id="PTHR42680:SF3">
    <property type="entry name" value="DCTP DEAMINASE"/>
    <property type="match status" value="1"/>
</dbReference>
<dbReference type="Pfam" id="PF22769">
    <property type="entry name" value="DCD"/>
    <property type="match status" value="1"/>
</dbReference>
<dbReference type="SUPFAM" id="SSF51283">
    <property type="entry name" value="dUTPase-like"/>
    <property type="match status" value="1"/>
</dbReference>
<name>DCDB_THEFY</name>
<protein>
    <recommendedName>
        <fullName evidence="1">dCTP deaminase, dUMP-forming</fullName>
        <ecNumber evidence="1">3.5.4.30</ecNumber>
    </recommendedName>
    <alternativeName>
        <fullName evidence="1">Bifunctional dCTP deaminase:dUTPase</fullName>
    </alternativeName>
    <alternativeName>
        <fullName evidence="1">DCD-DUT</fullName>
    </alternativeName>
</protein>
<sequence length="196" mass="21851">MLLSDRDLRAAIESGRVKLDPYDPELVQPSSIDVRLDRYFRVFENHKYPHIDPAVEQPGLTRLVEPEGDEPFILHPGEFVLASTYEMVTLPNDIASRLEGKSSLGRLGLLTHSTAGFIDPGFSGHVTLELSNVSTLPIKLYPGMRIGQLCMFQLSSPAENPYGSEVCGSRYQGQRGPTPSRSYLNFTRTKIREGDQ</sequence>
<organism>
    <name type="scientific">Thermobifida fusca (strain YX)</name>
    <dbReference type="NCBI Taxonomy" id="269800"/>
    <lineage>
        <taxon>Bacteria</taxon>
        <taxon>Bacillati</taxon>
        <taxon>Actinomycetota</taxon>
        <taxon>Actinomycetes</taxon>
        <taxon>Streptosporangiales</taxon>
        <taxon>Nocardiopsidaceae</taxon>
        <taxon>Thermobifida</taxon>
    </lineage>
</organism>
<comment type="function">
    <text evidence="1">Bifunctional enzyme that catalyzes both the deamination of dCTP to dUTP and the hydrolysis of dUTP to dUMP without releasing the toxic dUTP intermediate.</text>
</comment>
<comment type="catalytic activity">
    <reaction evidence="1">
        <text>dCTP + 2 H2O = dUMP + NH4(+) + diphosphate</text>
        <dbReference type="Rhea" id="RHEA:19205"/>
        <dbReference type="ChEBI" id="CHEBI:15377"/>
        <dbReference type="ChEBI" id="CHEBI:28938"/>
        <dbReference type="ChEBI" id="CHEBI:33019"/>
        <dbReference type="ChEBI" id="CHEBI:61481"/>
        <dbReference type="ChEBI" id="CHEBI:246422"/>
        <dbReference type="EC" id="3.5.4.30"/>
    </reaction>
</comment>
<comment type="pathway">
    <text evidence="1">Pyrimidine metabolism; dUMP biosynthesis; dUMP from dCTP: step 1/1.</text>
</comment>
<comment type="subunit">
    <text evidence="1">Homotrimer.</text>
</comment>
<comment type="similarity">
    <text evidence="1">Belongs to the dCTP deaminase family.</text>
</comment>
<proteinExistence type="inferred from homology"/>
<keyword id="KW-0378">Hydrolase</keyword>
<keyword id="KW-0546">Nucleotide metabolism</keyword>
<keyword id="KW-0547">Nucleotide-binding</keyword>
<gene>
    <name evidence="1" type="primary">dcd</name>
    <name type="ordered locus">Tfu_2932</name>
</gene>
<accession>Q47KQ7</accession>
<evidence type="ECO:0000255" key="1">
    <source>
        <dbReference type="HAMAP-Rule" id="MF_00146"/>
    </source>
</evidence>
<reference key="1">
    <citation type="journal article" date="2007" name="J. Bacteriol.">
        <title>Genome sequence and analysis of the soil cellulolytic actinomycete Thermobifida fusca YX.</title>
        <authorList>
            <person name="Lykidis A."/>
            <person name="Mavromatis K."/>
            <person name="Ivanova N."/>
            <person name="Anderson I."/>
            <person name="Land M."/>
            <person name="DiBartolo G."/>
            <person name="Martinez M."/>
            <person name="Lapidus A."/>
            <person name="Lucas S."/>
            <person name="Copeland A."/>
            <person name="Richardson P."/>
            <person name="Wilson D.B."/>
            <person name="Kyrpides N."/>
        </authorList>
    </citation>
    <scope>NUCLEOTIDE SEQUENCE [LARGE SCALE GENOMIC DNA]</scope>
    <source>
        <strain>YX</strain>
    </source>
</reference>